<protein>
    <recommendedName>
        <fullName evidence="1">ATP synthase subunit b 3</fullName>
    </recommendedName>
    <alternativeName>
        <fullName evidence="1">ATP synthase F(0) sector subunit b 3</fullName>
    </alternativeName>
    <alternativeName>
        <fullName evidence="1">ATPase subunit I 3</fullName>
    </alternativeName>
    <alternativeName>
        <fullName evidence="1">F-type ATPase subunit b 3</fullName>
        <shortName evidence="1">F-ATPase subunit b 3</shortName>
    </alternativeName>
</protein>
<keyword id="KW-0066">ATP synthesis</keyword>
<keyword id="KW-0997">Cell inner membrane</keyword>
<keyword id="KW-1003">Cell membrane</keyword>
<keyword id="KW-0138">CF(0)</keyword>
<keyword id="KW-0375">Hydrogen ion transport</keyword>
<keyword id="KW-0406">Ion transport</keyword>
<keyword id="KW-0472">Membrane</keyword>
<keyword id="KW-1185">Reference proteome</keyword>
<keyword id="KW-0812">Transmembrane</keyword>
<keyword id="KW-1133">Transmembrane helix</keyword>
<keyword id="KW-0813">Transport</keyword>
<accession>A8LKH7</accession>
<evidence type="ECO:0000255" key="1">
    <source>
        <dbReference type="HAMAP-Rule" id="MF_01398"/>
    </source>
</evidence>
<sequence>MKKLLLPALLTFSATPALAAKGPFFSLANTDFIVLISFIAFIGVLVYFKIPGILSGMLDKRAEGIKAELEEAKALREEAQTLLASYERKQREVQAQADAIVATAKEDAEAAAAQAKVDLEASIARRLATAEDQLASAQAAAIKEVKDKAVTVAIAAAADVISSKLGKAELNALNADAIKEVKAKLH</sequence>
<feature type="chain" id="PRO_5000280967" description="ATP synthase subunit b 3">
    <location>
        <begin position="1"/>
        <end position="186"/>
    </location>
</feature>
<feature type="transmembrane region" description="Helical" evidence="1">
    <location>
        <begin position="5"/>
        <end position="25"/>
    </location>
</feature>
<gene>
    <name evidence="1" type="primary">atpF3</name>
    <name type="ordered locus">Dshi_3027</name>
</gene>
<dbReference type="EMBL" id="CP000830">
    <property type="protein sequence ID" value="ABV94760.1"/>
    <property type="molecule type" value="Genomic_DNA"/>
</dbReference>
<dbReference type="RefSeq" id="WP_012179688.1">
    <property type="nucleotide sequence ID" value="NC_009952.1"/>
</dbReference>
<dbReference type="SMR" id="A8LKH7"/>
<dbReference type="STRING" id="398580.Dshi_3027"/>
<dbReference type="KEGG" id="dsh:Dshi_3027"/>
<dbReference type="eggNOG" id="COG0711">
    <property type="taxonomic scope" value="Bacteria"/>
</dbReference>
<dbReference type="HOGENOM" id="CLU_079215_6_2_5"/>
<dbReference type="OrthoDB" id="8479836at2"/>
<dbReference type="Proteomes" id="UP000006833">
    <property type="component" value="Chromosome"/>
</dbReference>
<dbReference type="GO" id="GO:0005886">
    <property type="term" value="C:plasma membrane"/>
    <property type="evidence" value="ECO:0007669"/>
    <property type="project" value="UniProtKB-SubCell"/>
</dbReference>
<dbReference type="GO" id="GO:0045259">
    <property type="term" value="C:proton-transporting ATP synthase complex"/>
    <property type="evidence" value="ECO:0007669"/>
    <property type="project" value="UniProtKB-KW"/>
</dbReference>
<dbReference type="GO" id="GO:0046933">
    <property type="term" value="F:proton-transporting ATP synthase activity, rotational mechanism"/>
    <property type="evidence" value="ECO:0007669"/>
    <property type="project" value="UniProtKB-UniRule"/>
</dbReference>
<dbReference type="GO" id="GO:0046961">
    <property type="term" value="F:proton-transporting ATPase activity, rotational mechanism"/>
    <property type="evidence" value="ECO:0007669"/>
    <property type="project" value="TreeGrafter"/>
</dbReference>
<dbReference type="CDD" id="cd06503">
    <property type="entry name" value="ATP-synt_Fo_b"/>
    <property type="match status" value="1"/>
</dbReference>
<dbReference type="HAMAP" id="MF_01398">
    <property type="entry name" value="ATP_synth_b_bprime"/>
    <property type="match status" value="1"/>
</dbReference>
<dbReference type="InterPro" id="IPR002146">
    <property type="entry name" value="ATP_synth_b/b'su_bac/chlpt"/>
</dbReference>
<dbReference type="InterPro" id="IPR050059">
    <property type="entry name" value="ATP_synthase_B_chain"/>
</dbReference>
<dbReference type="NCBIfam" id="NF009989">
    <property type="entry name" value="PRK13455.1"/>
    <property type="match status" value="1"/>
</dbReference>
<dbReference type="PANTHER" id="PTHR33445:SF1">
    <property type="entry name" value="ATP SYNTHASE SUBUNIT B"/>
    <property type="match status" value="1"/>
</dbReference>
<dbReference type="PANTHER" id="PTHR33445">
    <property type="entry name" value="ATP SYNTHASE SUBUNIT B', CHLOROPLASTIC"/>
    <property type="match status" value="1"/>
</dbReference>
<dbReference type="Pfam" id="PF00430">
    <property type="entry name" value="ATP-synt_B"/>
    <property type="match status" value="1"/>
</dbReference>
<proteinExistence type="inferred from homology"/>
<comment type="function">
    <text evidence="1">F(1)F(0) ATP synthase produces ATP from ADP in the presence of a proton or sodium gradient. F-type ATPases consist of two structural domains, F(1) containing the extramembraneous catalytic core and F(0) containing the membrane proton channel, linked together by a central stalk and a peripheral stalk. During catalysis, ATP synthesis in the catalytic domain of F(1) is coupled via a rotary mechanism of the central stalk subunits to proton translocation.</text>
</comment>
<comment type="function">
    <text evidence="1">Component of the F(0) channel, it forms part of the peripheral stalk, linking F(1) to F(0).</text>
</comment>
<comment type="subunit">
    <text evidence="1">F-type ATPases have 2 components, F(1) - the catalytic core - and F(0) - the membrane proton channel. F(1) has five subunits: alpha(3), beta(3), gamma(1), delta(1), epsilon(1). F(0) has three main subunits: a(1), b(2) and c(10-14). The alpha and beta chains form an alternating ring which encloses part of the gamma chain. F(1) is attached to F(0) by a central stalk formed by the gamma and epsilon chains, while a peripheral stalk is formed by the delta and b chains.</text>
</comment>
<comment type="subcellular location">
    <subcellularLocation>
        <location evidence="1">Cell inner membrane</location>
        <topology evidence="1">Single-pass membrane protein</topology>
    </subcellularLocation>
</comment>
<comment type="similarity">
    <text evidence="1">Belongs to the ATPase B chain family.</text>
</comment>
<reference key="1">
    <citation type="journal article" date="2010" name="ISME J.">
        <title>The complete genome sequence of the algal symbiont Dinoroseobacter shibae: a hitchhiker's guide to life in the sea.</title>
        <authorList>
            <person name="Wagner-Dobler I."/>
            <person name="Ballhausen B."/>
            <person name="Berger M."/>
            <person name="Brinkhoff T."/>
            <person name="Buchholz I."/>
            <person name="Bunk B."/>
            <person name="Cypionka H."/>
            <person name="Daniel R."/>
            <person name="Drepper T."/>
            <person name="Gerdts G."/>
            <person name="Hahnke S."/>
            <person name="Han C."/>
            <person name="Jahn D."/>
            <person name="Kalhoefer D."/>
            <person name="Kiss H."/>
            <person name="Klenk H.P."/>
            <person name="Kyrpides N."/>
            <person name="Liebl W."/>
            <person name="Liesegang H."/>
            <person name="Meincke L."/>
            <person name="Pati A."/>
            <person name="Petersen J."/>
            <person name="Piekarski T."/>
            <person name="Pommerenke C."/>
            <person name="Pradella S."/>
            <person name="Pukall R."/>
            <person name="Rabus R."/>
            <person name="Stackebrandt E."/>
            <person name="Thole S."/>
            <person name="Thompson L."/>
            <person name="Tielen P."/>
            <person name="Tomasch J."/>
            <person name="von Jan M."/>
            <person name="Wanphrut N."/>
            <person name="Wichels A."/>
            <person name="Zech H."/>
            <person name="Simon M."/>
        </authorList>
    </citation>
    <scope>NUCLEOTIDE SEQUENCE [LARGE SCALE GENOMIC DNA]</scope>
    <source>
        <strain>DSM 16493 / NCIMB 14021 / DFL 12</strain>
    </source>
</reference>
<organism>
    <name type="scientific">Dinoroseobacter shibae (strain DSM 16493 / NCIMB 14021 / DFL 12)</name>
    <dbReference type="NCBI Taxonomy" id="398580"/>
    <lineage>
        <taxon>Bacteria</taxon>
        <taxon>Pseudomonadati</taxon>
        <taxon>Pseudomonadota</taxon>
        <taxon>Alphaproteobacteria</taxon>
        <taxon>Rhodobacterales</taxon>
        <taxon>Roseobacteraceae</taxon>
        <taxon>Dinoroseobacter</taxon>
    </lineage>
</organism>
<name>ATPF3_DINSH</name>